<keyword id="KW-0106">Calcium</keyword>
<keyword id="KW-0963">Cytoplasm</keyword>
<keyword id="KW-0378">Hydrolase</keyword>
<keyword id="KW-0442">Lipid degradation</keyword>
<keyword id="KW-0443">Lipid metabolism</keyword>
<keyword id="KW-0472">Membrane</keyword>
<keyword id="KW-0479">Metal-binding</keyword>
<keyword id="KW-0597">Phosphoprotein</keyword>
<keyword id="KW-1185">Reference proteome</keyword>
<keyword id="KW-0677">Repeat</keyword>
<keyword id="KW-0807">Transducer</keyword>
<organism>
    <name type="scientific">Danio rerio</name>
    <name type="common">Zebrafish</name>
    <name type="synonym">Brachydanio rerio</name>
    <dbReference type="NCBI Taxonomy" id="7955"/>
    <lineage>
        <taxon>Eukaryota</taxon>
        <taxon>Metazoa</taxon>
        <taxon>Chordata</taxon>
        <taxon>Craniata</taxon>
        <taxon>Vertebrata</taxon>
        <taxon>Euteleostomi</taxon>
        <taxon>Actinopterygii</taxon>
        <taxon>Neopterygii</taxon>
        <taxon>Teleostei</taxon>
        <taxon>Ostariophysi</taxon>
        <taxon>Cypriniformes</taxon>
        <taxon>Danionidae</taxon>
        <taxon>Danioninae</taxon>
        <taxon>Danio</taxon>
    </lineage>
</organism>
<feature type="chain" id="PRO_0000306823" description="1-phosphatidylinositol 4,5-bisphosphate phosphodiesterase delta-3-A">
    <location>
        <begin position="1"/>
        <end position="784"/>
    </location>
</feature>
<feature type="domain" description="PH" evidence="4">
    <location>
        <begin position="38"/>
        <end position="149"/>
    </location>
</feature>
<feature type="domain" description="EF-hand 1" evidence="7">
    <location>
        <begin position="159"/>
        <end position="194"/>
    </location>
</feature>
<feature type="domain" description="EF-hand 2" evidence="7">
    <location>
        <begin position="195"/>
        <end position="230"/>
    </location>
</feature>
<feature type="domain" description="EF-hand 3" evidence="9">
    <location>
        <begin position="227"/>
        <end position="262"/>
    </location>
</feature>
<feature type="domain" description="PI-PLC X-box" evidence="5">
    <location>
        <begin position="313"/>
        <end position="458"/>
    </location>
</feature>
<feature type="domain" description="PI-PLC Y-box" evidence="6">
    <location>
        <begin position="506"/>
        <end position="621"/>
    </location>
</feature>
<feature type="domain" description="C2" evidence="3">
    <location>
        <begin position="621"/>
        <end position="750"/>
    </location>
</feature>
<feature type="region of interest" description="Disordered" evidence="8">
    <location>
        <begin position="1"/>
        <end position="25"/>
    </location>
</feature>
<feature type="region of interest" description="Substrate binding" evidence="1">
    <location>
        <begin position="48"/>
        <end position="78"/>
    </location>
</feature>
<feature type="region of interest" description="Disordered" evidence="8">
    <location>
        <begin position="473"/>
        <end position="498"/>
    </location>
</feature>
<feature type="compositionally biased region" description="Basic and acidic residues" evidence="8">
    <location>
        <begin position="16"/>
        <end position="25"/>
    </location>
</feature>
<feature type="compositionally biased region" description="Basic and acidic residues" evidence="8">
    <location>
        <begin position="486"/>
        <end position="495"/>
    </location>
</feature>
<feature type="active site" evidence="5">
    <location>
        <position position="328"/>
    </location>
</feature>
<feature type="active site" evidence="5">
    <location>
        <position position="373"/>
    </location>
</feature>
<feature type="binding site" evidence="7">
    <location>
        <position position="172"/>
    </location>
    <ligand>
        <name>Ca(2+)</name>
        <dbReference type="ChEBI" id="CHEBI:29108"/>
        <label>1</label>
    </ligand>
</feature>
<feature type="binding site" evidence="7">
    <location>
        <position position="174"/>
    </location>
    <ligand>
        <name>Ca(2+)</name>
        <dbReference type="ChEBI" id="CHEBI:29108"/>
        <label>1</label>
    </ligand>
</feature>
<feature type="binding site" evidence="7">
    <location>
        <position position="176"/>
    </location>
    <ligand>
        <name>Ca(2+)</name>
        <dbReference type="ChEBI" id="CHEBI:29108"/>
        <label>1</label>
    </ligand>
</feature>
<feature type="binding site" evidence="7">
    <location>
        <position position="178"/>
    </location>
    <ligand>
        <name>Ca(2+)</name>
        <dbReference type="ChEBI" id="CHEBI:29108"/>
        <label>1</label>
    </ligand>
</feature>
<feature type="binding site" evidence="7">
    <location>
        <position position="183"/>
    </location>
    <ligand>
        <name>Ca(2+)</name>
        <dbReference type="ChEBI" id="CHEBI:29108"/>
        <label>1</label>
    </ligand>
</feature>
<feature type="binding site" evidence="7">
    <location>
        <position position="208"/>
    </location>
    <ligand>
        <name>Ca(2+)</name>
        <dbReference type="ChEBI" id="CHEBI:29108"/>
        <label>2</label>
    </ligand>
</feature>
<feature type="binding site" evidence="7">
    <location>
        <position position="210"/>
    </location>
    <ligand>
        <name>Ca(2+)</name>
        <dbReference type="ChEBI" id="CHEBI:29108"/>
        <label>2</label>
    </ligand>
</feature>
<feature type="binding site" evidence="7">
    <location>
        <position position="212"/>
    </location>
    <ligand>
        <name>Ca(2+)</name>
        <dbReference type="ChEBI" id="CHEBI:29108"/>
        <label>2</label>
    </ligand>
</feature>
<feature type="binding site" evidence="7">
    <location>
        <position position="214"/>
    </location>
    <ligand>
        <name>Ca(2+)</name>
        <dbReference type="ChEBI" id="CHEBI:29108"/>
        <label>2</label>
    </ligand>
</feature>
<feature type="binding site" evidence="7">
    <location>
        <position position="219"/>
    </location>
    <ligand>
        <name>Ca(2+)</name>
        <dbReference type="ChEBI" id="CHEBI:29108"/>
        <label>2</label>
    </ligand>
</feature>
<feature type="binding site" evidence="1">
    <location>
        <position position="329"/>
    </location>
    <ligand>
        <name>Ca(2+)</name>
        <dbReference type="ChEBI" id="CHEBI:29108"/>
        <label>3</label>
        <note>catalytic</note>
    </ligand>
</feature>
<feature type="binding site" evidence="1">
    <location>
        <position position="358"/>
    </location>
    <ligand>
        <name>Ca(2+)</name>
        <dbReference type="ChEBI" id="CHEBI:29108"/>
        <label>3</label>
        <note>catalytic</note>
    </ligand>
</feature>
<feature type="binding site" evidence="1">
    <location>
        <position position="360"/>
    </location>
    <ligand>
        <name>Ca(2+)</name>
        <dbReference type="ChEBI" id="CHEBI:29108"/>
        <label>3</label>
        <note>catalytic</note>
    </ligand>
</feature>
<feature type="binding site" evidence="1">
    <location>
        <position position="407"/>
    </location>
    <ligand>
        <name>Ca(2+)</name>
        <dbReference type="ChEBI" id="CHEBI:29108"/>
        <label>3</label>
        <note>catalytic</note>
    </ligand>
</feature>
<feature type="binding site" evidence="1">
    <location>
        <position position="456"/>
    </location>
    <ligand>
        <name>substrate</name>
    </ligand>
</feature>
<feature type="binding site" evidence="1">
    <location>
        <position position="458"/>
    </location>
    <ligand>
        <name>substrate</name>
    </ligand>
</feature>
<feature type="binding site" evidence="1">
    <location>
        <position position="534"/>
    </location>
    <ligand>
        <name>substrate</name>
    </ligand>
</feature>
<feature type="binding site" evidence="1">
    <location>
        <position position="561"/>
    </location>
    <ligand>
        <name>substrate</name>
    </ligand>
</feature>
<feature type="binding site" evidence="1">
    <location>
        <position position="664"/>
    </location>
    <ligand>
        <name>Ca(2+)</name>
        <dbReference type="ChEBI" id="CHEBI:29108"/>
        <label>4</label>
    </ligand>
</feature>
<feature type="binding site" evidence="1">
    <location>
        <position position="666"/>
    </location>
    <ligand>
        <name>Ca(2+)</name>
        <dbReference type="ChEBI" id="CHEBI:29108"/>
        <label>4</label>
    </ligand>
</feature>
<feature type="binding site" evidence="1">
    <location>
        <position position="690"/>
    </location>
    <ligand>
        <name>Ca(2+)</name>
        <dbReference type="ChEBI" id="CHEBI:29108"/>
        <label>4</label>
    </ligand>
</feature>
<feature type="binding site" evidence="1">
    <location>
        <position position="719"/>
    </location>
    <ligand>
        <name>Ca(2+)</name>
        <dbReference type="ChEBI" id="CHEBI:29108"/>
        <label>5</label>
    </ligand>
</feature>
<feature type="binding site" evidence="1">
    <location>
        <position position="721"/>
    </location>
    <ligand>
        <name>Ca(2+)</name>
        <dbReference type="ChEBI" id="CHEBI:29108"/>
        <label>5</label>
    </ligand>
</feature>
<dbReference type="EC" id="3.1.4.11" evidence="2"/>
<dbReference type="EMBL" id="BC139849">
    <property type="protein sequence ID" value="AAI39850.1"/>
    <property type="molecule type" value="mRNA"/>
</dbReference>
<dbReference type="RefSeq" id="NP_001092893.1">
    <property type="nucleotide sequence ID" value="NM_001099423.1"/>
</dbReference>
<dbReference type="SMR" id="A5D6R3"/>
<dbReference type="FunCoup" id="A5D6R3">
    <property type="interactions" value="947"/>
</dbReference>
<dbReference type="STRING" id="7955.ENSDARP00000093449"/>
<dbReference type="PaxDb" id="7955-ENSDARP00000093449"/>
<dbReference type="Ensembl" id="ENSDART00000102674">
    <property type="protein sequence ID" value="ENSDARP00000093449"/>
    <property type="gene ID" value="ENSDARG00000052957"/>
</dbReference>
<dbReference type="GeneID" id="569040"/>
<dbReference type="KEGG" id="dre:569040"/>
<dbReference type="AGR" id="ZFIN:ZDB-GENE-070620-1"/>
<dbReference type="CTD" id="569040"/>
<dbReference type="ZFIN" id="ZDB-GENE-070620-1">
    <property type="gene designation" value="plcd3a"/>
</dbReference>
<dbReference type="eggNOG" id="KOG0169">
    <property type="taxonomic scope" value="Eukaryota"/>
</dbReference>
<dbReference type="HOGENOM" id="CLU_002738_0_2_1"/>
<dbReference type="InParanoid" id="A5D6R3"/>
<dbReference type="OMA" id="LAVYCHA"/>
<dbReference type="OrthoDB" id="269822at2759"/>
<dbReference type="PhylomeDB" id="A5D6R3"/>
<dbReference type="TreeFam" id="TF313216"/>
<dbReference type="Reactome" id="R-DRE-1855204">
    <property type="pathway name" value="Synthesis of IP3 and IP4 in the cytosol"/>
</dbReference>
<dbReference type="PRO" id="PR:A5D6R3"/>
<dbReference type="Proteomes" id="UP000000437">
    <property type="component" value="Chromosome 3"/>
</dbReference>
<dbReference type="Bgee" id="ENSDARG00000052957">
    <property type="expression patterns" value="Expressed in muscle tissue and 19 other cell types or tissues"/>
</dbReference>
<dbReference type="GO" id="GO:0032154">
    <property type="term" value="C:cleavage furrow"/>
    <property type="evidence" value="ECO:0007669"/>
    <property type="project" value="UniProtKB-SubCell"/>
</dbReference>
<dbReference type="GO" id="GO:0005737">
    <property type="term" value="C:cytoplasm"/>
    <property type="evidence" value="ECO:0007669"/>
    <property type="project" value="UniProtKB-SubCell"/>
</dbReference>
<dbReference type="GO" id="GO:0005886">
    <property type="term" value="C:plasma membrane"/>
    <property type="evidence" value="ECO:0000318"/>
    <property type="project" value="GO_Central"/>
</dbReference>
<dbReference type="GO" id="GO:0005509">
    <property type="term" value="F:calcium ion binding"/>
    <property type="evidence" value="ECO:0007669"/>
    <property type="project" value="InterPro"/>
</dbReference>
<dbReference type="GO" id="GO:0004435">
    <property type="term" value="F:phosphatidylinositol-4,5-bisphosphate phospholipase C activity"/>
    <property type="evidence" value="ECO:0000318"/>
    <property type="project" value="GO_Central"/>
</dbReference>
<dbReference type="GO" id="GO:0035556">
    <property type="term" value="P:intracellular signal transduction"/>
    <property type="evidence" value="ECO:0007669"/>
    <property type="project" value="InterPro"/>
</dbReference>
<dbReference type="GO" id="GO:0016042">
    <property type="term" value="P:lipid catabolic process"/>
    <property type="evidence" value="ECO:0007669"/>
    <property type="project" value="UniProtKB-KW"/>
</dbReference>
<dbReference type="CDD" id="cd00275">
    <property type="entry name" value="C2_PLC_like"/>
    <property type="match status" value="1"/>
</dbReference>
<dbReference type="CDD" id="cd16218">
    <property type="entry name" value="EFh_PI-PLCdelta3"/>
    <property type="match status" value="1"/>
</dbReference>
<dbReference type="CDD" id="cd13363">
    <property type="entry name" value="PH_PLC_delta"/>
    <property type="match status" value="1"/>
</dbReference>
<dbReference type="CDD" id="cd08630">
    <property type="entry name" value="PI-PLCc_delta3"/>
    <property type="match status" value="1"/>
</dbReference>
<dbReference type="FunFam" id="1.10.238.10:FF:000005">
    <property type="entry name" value="Phosphoinositide phospholipase C"/>
    <property type="match status" value="1"/>
</dbReference>
<dbReference type="FunFam" id="1.10.238.10:FF:000071">
    <property type="entry name" value="Phosphoinositide phospholipase C"/>
    <property type="match status" value="1"/>
</dbReference>
<dbReference type="FunFam" id="2.30.29.30:FF:000088">
    <property type="entry name" value="Phosphoinositide phospholipase C"/>
    <property type="match status" value="1"/>
</dbReference>
<dbReference type="FunFam" id="2.60.40.150:FF:000058">
    <property type="entry name" value="Phosphoinositide phospholipase C"/>
    <property type="match status" value="1"/>
</dbReference>
<dbReference type="FunFam" id="3.20.20.190:FF:000022">
    <property type="entry name" value="Phosphoinositide phospholipase C"/>
    <property type="match status" value="1"/>
</dbReference>
<dbReference type="Gene3D" id="2.60.40.150">
    <property type="entry name" value="C2 domain"/>
    <property type="match status" value="1"/>
</dbReference>
<dbReference type="Gene3D" id="1.10.238.10">
    <property type="entry name" value="EF-hand"/>
    <property type="match status" value="2"/>
</dbReference>
<dbReference type="Gene3D" id="3.20.20.190">
    <property type="entry name" value="Phosphatidylinositol (PI) phosphodiesterase"/>
    <property type="match status" value="1"/>
</dbReference>
<dbReference type="Gene3D" id="2.30.29.30">
    <property type="entry name" value="Pleckstrin-homology domain (PH domain)/Phosphotyrosine-binding domain (PTB)"/>
    <property type="match status" value="1"/>
</dbReference>
<dbReference type="InterPro" id="IPR000008">
    <property type="entry name" value="C2_dom"/>
</dbReference>
<dbReference type="InterPro" id="IPR035892">
    <property type="entry name" value="C2_domain_sf"/>
</dbReference>
<dbReference type="InterPro" id="IPR011992">
    <property type="entry name" value="EF-hand-dom_pair"/>
</dbReference>
<dbReference type="InterPro" id="IPR018247">
    <property type="entry name" value="EF_Hand_1_Ca_BS"/>
</dbReference>
<dbReference type="InterPro" id="IPR002048">
    <property type="entry name" value="EF_hand_dom"/>
</dbReference>
<dbReference type="InterPro" id="IPR011993">
    <property type="entry name" value="PH-like_dom_sf"/>
</dbReference>
<dbReference type="InterPro" id="IPR001849">
    <property type="entry name" value="PH_domain"/>
</dbReference>
<dbReference type="InterPro" id="IPR001192">
    <property type="entry name" value="PI-PLC_fam"/>
</dbReference>
<dbReference type="InterPro" id="IPR039504">
    <property type="entry name" value="PLC-delta3_EF-hand"/>
</dbReference>
<dbReference type="InterPro" id="IPR017946">
    <property type="entry name" value="PLC-like_Pdiesterase_TIM-brl"/>
</dbReference>
<dbReference type="InterPro" id="IPR000909">
    <property type="entry name" value="PLipase_C_PInositol-sp_X_dom"/>
</dbReference>
<dbReference type="InterPro" id="IPR001711">
    <property type="entry name" value="PLipase_C_Pinositol-sp_Y"/>
</dbReference>
<dbReference type="PANTHER" id="PTHR10336:SF33">
    <property type="entry name" value="1-PHOSPHATIDYLINOSITOL 4,5-BISPHOSPHATE PHOSPHODIESTERASE DELTA-3"/>
    <property type="match status" value="1"/>
</dbReference>
<dbReference type="PANTHER" id="PTHR10336">
    <property type="entry name" value="PHOSPHOINOSITIDE-SPECIFIC PHOSPHOLIPASE C FAMILY PROTEIN"/>
    <property type="match status" value="1"/>
</dbReference>
<dbReference type="Pfam" id="PF00168">
    <property type="entry name" value="C2"/>
    <property type="match status" value="1"/>
</dbReference>
<dbReference type="Pfam" id="PF14788">
    <property type="entry name" value="EF-hand_10"/>
    <property type="match status" value="1"/>
</dbReference>
<dbReference type="Pfam" id="PF00169">
    <property type="entry name" value="PH"/>
    <property type="match status" value="1"/>
</dbReference>
<dbReference type="Pfam" id="PF00388">
    <property type="entry name" value="PI-PLC-X"/>
    <property type="match status" value="1"/>
</dbReference>
<dbReference type="Pfam" id="PF00387">
    <property type="entry name" value="PI-PLC-Y"/>
    <property type="match status" value="1"/>
</dbReference>
<dbReference type="PRINTS" id="PR00390">
    <property type="entry name" value="PHPHLIPASEC"/>
</dbReference>
<dbReference type="SMART" id="SM00239">
    <property type="entry name" value="C2"/>
    <property type="match status" value="1"/>
</dbReference>
<dbReference type="SMART" id="SM00233">
    <property type="entry name" value="PH"/>
    <property type="match status" value="1"/>
</dbReference>
<dbReference type="SMART" id="SM00148">
    <property type="entry name" value="PLCXc"/>
    <property type="match status" value="1"/>
</dbReference>
<dbReference type="SMART" id="SM00149">
    <property type="entry name" value="PLCYc"/>
    <property type="match status" value="1"/>
</dbReference>
<dbReference type="SUPFAM" id="SSF49562">
    <property type="entry name" value="C2 domain (Calcium/lipid-binding domain, CaLB)"/>
    <property type="match status" value="1"/>
</dbReference>
<dbReference type="SUPFAM" id="SSF47473">
    <property type="entry name" value="EF-hand"/>
    <property type="match status" value="1"/>
</dbReference>
<dbReference type="SUPFAM" id="SSF50729">
    <property type="entry name" value="PH domain-like"/>
    <property type="match status" value="1"/>
</dbReference>
<dbReference type="SUPFAM" id="SSF51695">
    <property type="entry name" value="PLC-like phosphodiesterases"/>
    <property type="match status" value="1"/>
</dbReference>
<dbReference type="PROSITE" id="PS50004">
    <property type="entry name" value="C2"/>
    <property type="match status" value="1"/>
</dbReference>
<dbReference type="PROSITE" id="PS00018">
    <property type="entry name" value="EF_HAND_1"/>
    <property type="match status" value="2"/>
</dbReference>
<dbReference type="PROSITE" id="PS50222">
    <property type="entry name" value="EF_HAND_2"/>
    <property type="match status" value="2"/>
</dbReference>
<dbReference type="PROSITE" id="PS50003">
    <property type="entry name" value="PH_DOMAIN"/>
    <property type="match status" value="1"/>
</dbReference>
<dbReference type="PROSITE" id="PS50007">
    <property type="entry name" value="PIPLC_X_DOMAIN"/>
    <property type="match status" value="1"/>
</dbReference>
<dbReference type="PROSITE" id="PS50008">
    <property type="entry name" value="PIPLC_Y_DOMAIN"/>
    <property type="match status" value="1"/>
</dbReference>
<gene>
    <name type="primary">plcd3a</name>
    <name type="ORF">zgc:158396</name>
</gene>
<accession>A5D6R3</accession>
<comment type="function">
    <text evidence="2">Hydrolyzes the phosphatidylinositol 4,5-bisphosphate (PIP2) to generate 2 second messenger molecules diacylglycerol (DAG) and inositol 1,4,5-trisphosphate (IP3). DAG mediates the activation of protein kinase C (PKC), while IP3 releases Ca(2+) from intracellular stores (By similarity).</text>
</comment>
<comment type="catalytic activity">
    <reaction evidence="2">
        <text>a 1,2-diacyl-sn-glycero-3-phospho-(1D-myo-inositol-4,5-bisphosphate) + H2O = 1D-myo-inositol 1,4,5-trisphosphate + a 1,2-diacyl-sn-glycerol + H(+)</text>
        <dbReference type="Rhea" id="RHEA:33179"/>
        <dbReference type="ChEBI" id="CHEBI:15377"/>
        <dbReference type="ChEBI" id="CHEBI:15378"/>
        <dbReference type="ChEBI" id="CHEBI:17815"/>
        <dbReference type="ChEBI" id="CHEBI:58456"/>
        <dbReference type="ChEBI" id="CHEBI:203600"/>
        <dbReference type="EC" id="3.1.4.11"/>
    </reaction>
    <physiologicalReaction direction="left-to-right" evidence="2">
        <dbReference type="Rhea" id="RHEA:33180"/>
    </physiologicalReaction>
</comment>
<comment type="cofactor">
    <cofactor evidence="3">
        <name>Ca(2+)</name>
        <dbReference type="ChEBI" id="CHEBI:29108"/>
    </cofactor>
    <text evidence="2">Binds 5 Ca(2+) ions per subunit. Two of the Ca(2+) ions are bound to the C2 domain.</text>
</comment>
<comment type="subcellular location">
    <subcellularLocation>
        <location evidence="2">Membrane</location>
        <topology evidence="2">Peripheral membrane protein</topology>
    </subcellularLocation>
    <subcellularLocation>
        <location evidence="2">Cytoplasm</location>
    </subcellularLocation>
    <subcellularLocation>
        <location evidence="2">Cleavage furrow</location>
    </subcellularLocation>
    <text evidence="2">Localizes at the cleavage furrow during cytokinesis.</text>
</comment>
<comment type="domain">
    <text evidence="2">The C2 domain is a Ca(2+)-dependent membrane-targeting module.</text>
</comment>
<comment type="domain">
    <text evidence="2">The PH domain mediates interaction with the surface membrane by binding to PIP2.</text>
</comment>
<reference key="1">
    <citation type="submission" date="2007-04" db="EMBL/GenBank/DDBJ databases">
        <authorList>
            <consortium name="NIH - Zebrafish Gene Collection (ZGC) project"/>
        </authorList>
    </citation>
    <scope>NUCLEOTIDE SEQUENCE [LARGE SCALE MRNA]</scope>
    <source>
        <tissue>Kidney</tissue>
    </source>
</reference>
<reference key="2">
    <citation type="journal article" date="2008" name="Genomics">
        <title>Duplication of phospholipase C-delta gene family in fish genomes.</title>
        <authorList>
            <person name="Kim M.S."/>
            <person name="Seo J.S."/>
            <person name="Ahn S.J."/>
            <person name="Kim N.Y."/>
            <person name="Je J.E."/>
            <person name="Sung J.H."/>
            <person name="Lee H.H."/>
            <person name="Chung J.K."/>
        </authorList>
    </citation>
    <scope>GENE DUPLICATION</scope>
</reference>
<sequence>MLGRKKNPETVQTESKSVESKTHDPLRRLGVLDDEDVLLMLQGSKMMKVRSQRWRKDRRLKLLEDCVTVWCESSKTSRKSNRQQTFSVTEVECVREGCQSECLRRMTDLVPEKNCFTVVFRGGRKSLDLCCHTQEEAERWVRGIRTLKDRVSNMSQKEKLDHWIRGYLRRADQNQDGKMSYDEVKHLLQLINIDLNEQYARTLFKKCDRSCDGRLDHVEIEEFCREMMRRPELDAVFRHYSGNGCVLTTLELRDFLGDQGEDASLVHAKSLIQTFELNDWAQKNLFMTQNGFTMYMLSKENDVFNPDHTHVYQDMSKPLAHYYISSSHNTYLTKDQVTSASSTEPYIRALNQGCRCVELDCWDGDKGEPIIYHGHTLTSKVLFKEVIETIAQYAFKASPYPLILSLENHCSVEQQAIMAQQLQSILGKKLLAKPLSDLPLKQLPSPEELKGRILLKGKKLNGLLGKTESWTSFTNSSDEESVAGGNKKESKKDLARSASTKLSPELSDLVVYCQSVPFSGFETANQRPPSVITSFSENEALKLIKDSGKLFVRNNSRQLSRIYPSAQRLQSSNFDPQDMWNAGCQMVALNFQTPGEQMDLNQGRFLPNGRCGYVLKPEFLCDPKSDFDPENTGGGPGHIPTQLTIRVISAQQLPKINTDKPNSIVDPQVWVEIHGVSIDKARAKTQRIDNNGFNPRWDCTVSFQLQLPELALVRFMVEDHDHKSKNDFIGQFTLPFTSLRTGYRHVHLLKADGSTLSPATLFIHVKVVRRGVHIKTVSERIGKA</sequence>
<evidence type="ECO:0000250" key="1"/>
<evidence type="ECO:0000250" key="2">
    <source>
        <dbReference type="UniProtKB" id="Q8N3E9"/>
    </source>
</evidence>
<evidence type="ECO:0000255" key="3">
    <source>
        <dbReference type="PROSITE-ProRule" id="PRU00041"/>
    </source>
</evidence>
<evidence type="ECO:0000255" key="4">
    <source>
        <dbReference type="PROSITE-ProRule" id="PRU00145"/>
    </source>
</evidence>
<evidence type="ECO:0000255" key="5">
    <source>
        <dbReference type="PROSITE-ProRule" id="PRU00270"/>
    </source>
</evidence>
<evidence type="ECO:0000255" key="6">
    <source>
        <dbReference type="PROSITE-ProRule" id="PRU00271"/>
    </source>
</evidence>
<evidence type="ECO:0000255" key="7">
    <source>
        <dbReference type="PROSITE-ProRule" id="PRU00448"/>
    </source>
</evidence>
<evidence type="ECO:0000256" key="8">
    <source>
        <dbReference type="SAM" id="MobiDB-lite"/>
    </source>
</evidence>
<evidence type="ECO:0000305" key="9"/>
<proteinExistence type="evidence at transcript level"/>
<protein>
    <recommendedName>
        <fullName evidence="9">1-phosphatidylinositol 4,5-bisphosphate phosphodiesterase delta-3-A</fullName>
        <ecNumber evidence="2">3.1.4.11</ecNumber>
    </recommendedName>
    <alternativeName>
        <fullName>Phosphoinositide phospholipase C-delta-3-A</fullName>
    </alternativeName>
    <alternativeName>
        <fullName>Phospholipase C-delta-3-A</fullName>
        <shortName>PLC-delta-3-A</shortName>
    </alternativeName>
</protein>
<name>PLD3A_DANRE</name>